<organism>
    <name type="scientific">Staphylococcus aureus (strain Mu50 / ATCC 700699)</name>
    <dbReference type="NCBI Taxonomy" id="158878"/>
    <lineage>
        <taxon>Bacteria</taxon>
        <taxon>Bacillati</taxon>
        <taxon>Bacillota</taxon>
        <taxon>Bacilli</taxon>
        <taxon>Bacillales</taxon>
        <taxon>Staphylococcaceae</taxon>
        <taxon>Staphylococcus</taxon>
    </lineage>
</organism>
<gene>
    <name type="ordered locus">SAV1514</name>
</gene>
<sequence>MDMNFDLYMNGVVEQARNEIESAGYEQLTTAEDVDKVLKQDGTTLVMINSVCGCAGGIARPAASHALHYDVLPDRLVTVFAGQDKEATQRAREYFEGYAPSSPSFALVKDGKITEMIERHQIEGHDVMNVINQLQTLFNKYCEER</sequence>
<dbReference type="EMBL" id="BA000017">
    <property type="protein sequence ID" value="BAB57676.1"/>
    <property type="molecule type" value="Genomic_DNA"/>
</dbReference>
<dbReference type="SMR" id="Q99TX9"/>
<dbReference type="KEGG" id="sav:SAV1514"/>
<dbReference type="HOGENOM" id="CLU_132521_0_0_9"/>
<dbReference type="PhylomeDB" id="Q99TX9"/>
<dbReference type="Proteomes" id="UP000002481">
    <property type="component" value="Chromosome"/>
</dbReference>
<dbReference type="GO" id="GO:0045454">
    <property type="term" value="P:cell redox homeostasis"/>
    <property type="evidence" value="ECO:0000250"/>
    <property type="project" value="UniProtKB"/>
</dbReference>
<dbReference type="Gene3D" id="3.40.30.10">
    <property type="entry name" value="Glutaredoxin"/>
    <property type="match status" value="1"/>
</dbReference>
<dbReference type="InterPro" id="IPR009474">
    <property type="entry name" value="BrxB/BrxA"/>
</dbReference>
<dbReference type="NCBIfam" id="TIGR04191">
    <property type="entry name" value="YphP_YqiW"/>
    <property type="match status" value="1"/>
</dbReference>
<dbReference type="PANTHER" id="PTHR40052:SF1">
    <property type="entry name" value="BACILLIREDOXIN BRXB"/>
    <property type="match status" value="1"/>
</dbReference>
<dbReference type="PANTHER" id="PTHR40052">
    <property type="entry name" value="UPF0403 PROTEIN YQIW-RELATED"/>
    <property type="match status" value="1"/>
</dbReference>
<dbReference type="Pfam" id="PF06491">
    <property type="entry name" value="Disulph_isomer"/>
    <property type="match status" value="1"/>
</dbReference>
<protein>
    <recommendedName>
        <fullName evidence="1">Bacilliredoxin SAV1514</fullName>
    </recommendedName>
</protein>
<reference key="1">
    <citation type="journal article" date="2001" name="Lancet">
        <title>Whole genome sequencing of meticillin-resistant Staphylococcus aureus.</title>
        <authorList>
            <person name="Kuroda M."/>
            <person name="Ohta T."/>
            <person name="Uchiyama I."/>
            <person name="Baba T."/>
            <person name="Yuzawa H."/>
            <person name="Kobayashi I."/>
            <person name="Cui L."/>
            <person name="Oguchi A."/>
            <person name="Aoki K."/>
            <person name="Nagai Y."/>
            <person name="Lian J.-Q."/>
            <person name="Ito T."/>
            <person name="Kanamori M."/>
            <person name="Matsumaru H."/>
            <person name="Maruyama A."/>
            <person name="Murakami H."/>
            <person name="Hosoyama A."/>
            <person name="Mizutani-Ui Y."/>
            <person name="Takahashi N.K."/>
            <person name="Sawano T."/>
            <person name="Inoue R."/>
            <person name="Kaito C."/>
            <person name="Sekimizu K."/>
            <person name="Hirakawa H."/>
            <person name="Kuhara S."/>
            <person name="Goto S."/>
            <person name="Yabuzaki J."/>
            <person name="Kanehisa M."/>
            <person name="Yamashita A."/>
            <person name="Oshima K."/>
            <person name="Furuya K."/>
            <person name="Yoshino C."/>
            <person name="Shiba T."/>
            <person name="Hattori M."/>
            <person name="Ogasawara N."/>
            <person name="Hayashi H."/>
            <person name="Hiramatsu K."/>
        </authorList>
    </citation>
    <scope>NUCLEOTIDE SEQUENCE [LARGE SCALE GENOMIC DNA]</scope>
    <source>
        <strain>Mu50 / ATCC 700699</strain>
    </source>
</reference>
<comment type="similarity">
    <text evidence="1">Belongs to the bacilliredoxin family.</text>
</comment>
<feature type="chain" id="PRO_0000272004" description="Bacilliredoxin SAV1514">
    <location>
        <begin position="1"/>
        <end position="145"/>
    </location>
</feature>
<evidence type="ECO:0000305" key="1"/>
<accession>Q99TX9</accession>
<name>Y1514_STAAM</name>
<proteinExistence type="inferred from homology"/>